<keyword id="KW-0150">Chloroplast</keyword>
<keyword id="KW-0934">Plastid</keyword>
<keyword id="KW-0687">Ribonucleoprotein</keyword>
<keyword id="KW-0689">Ribosomal protein</keyword>
<proteinExistence type="inferred from homology"/>
<protein>
    <recommendedName>
        <fullName evidence="1">Large ribosomal subunit protein bL32c</fullName>
    </recommendedName>
    <alternativeName>
        <fullName evidence="2">50S ribosomal protein L32, chloroplastic</fullName>
    </alternativeName>
</protein>
<evidence type="ECO:0000255" key="1">
    <source>
        <dbReference type="HAMAP-Rule" id="MF_00340"/>
    </source>
</evidence>
<evidence type="ECO:0000305" key="2"/>
<comment type="subcellular location">
    <subcellularLocation>
        <location>Plastid</location>
        <location>Chloroplast</location>
    </subcellularLocation>
</comment>
<comment type="similarity">
    <text evidence="1">Belongs to the bacterial ribosomal protein bL32 family.</text>
</comment>
<name>RK32_LACSA</name>
<dbReference type="EMBL" id="AP007232">
    <property type="protein sequence ID" value="BAE47643.1"/>
    <property type="molecule type" value="Genomic_DNA"/>
</dbReference>
<dbReference type="EMBL" id="DQ383816">
    <property type="protein sequence ID" value="ABD47290.1"/>
    <property type="molecule type" value="Genomic_DNA"/>
</dbReference>
<dbReference type="RefSeq" id="YP_398376.1">
    <property type="nucleotide sequence ID" value="NC_007578.1"/>
</dbReference>
<dbReference type="SMR" id="Q332S9"/>
<dbReference type="GeneID" id="3772819"/>
<dbReference type="KEGG" id="lsv:3772819"/>
<dbReference type="GO" id="GO:0009507">
    <property type="term" value="C:chloroplast"/>
    <property type="evidence" value="ECO:0007669"/>
    <property type="project" value="UniProtKB-SubCell"/>
</dbReference>
<dbReference type="GO" id="GO:0015934">
    <property type="term" value="C:large ribosomal subunit"/>
    <property type="evidence" value="ECO:0007669"/>
    <property type="project" value="InterPro"/>
</dbReference>
<dbReference type="GO" id="GO:0003735">
    <property type="term" value="F:structural constituent of ribosome"/>
    <property type="evidence" value="ECO:0007669"/>
    <property type="project" value="InterPro"/>
</dbReference>
<dbReference type="GO" id="GO:0006412">
    <property type="term" value="P:translation"/>
    <property type="evidence" value="ECO:0007669"/>
    <property type="project" value="UniProtKB-UniRule"/>
</dbReference>
<dbReference type="HAMAP" id="MF_00340">
    <property type="entry name" value="Ribosomal_bL32"/>
    <property type="match status" value="1"/>
</dbReference>
<dbReference type="InterPro" id="IPR002677">
    <property type="entry name" value="Ribosomal_bL32"/>
</dbReference>
<dbReference type="InterPro" id="IPR044958">
    <property type="entry name" value="Ribosomal_bL32_plant/cyanobact"/>
</dbReference>
<dbReference type="InterPro" id="IPR011332">
    <property type="entry name" value="Ribosomal_zn-bd"/>
</dbReference>
<dbReference type="PANTHER" id="PTHR36083">
    <property type="entry name" value="50S RIBOSOMAL PROTEIN L32, CHLOROPLASTIC"/>
    <property type="match status" value="1"/>
</dbReference>
<dbReference type="PANTHER" id="PTHR36083:SF1">
    <property type="entry name" value="LARGE RIBOSOMAL SUBUNIT PROTEIN BL32C"/>
    <property type="match status" value="1"/>
</dbReference>
<dbReference type="Pfam" id="PF01783">
    <property type="entry name" value="Ribosomal_L32p"/>
    <property type="match status" value="1"/>
</dbReference>
<dbReference type="SUPFAM" id="SSF57829">
    <property type="entry name" value="Zn-binding ribosomal proteins"/>
    <property type="match status" value="1"/>
</dbReference>
<geneLocation type="chloroplast"/>
<sequence length="54" mass="6183">MAVPKKRTSISKKRIRKNIWKRKGYWAALKALSLGKSLSTGNSKSFFVRQTNKS</sequence>
<accession>Q332S9</accession>
<reference key="1">
    <citation type="journal article" date="2006" name="Transgenic Res.">
        <title>Efficient and stable transformation of Lactuca sativa L. cv. Cisco (lettuce) plastids.</title>
        <authorList>
            <person name="Kanamoto H."/>
            <person name="Yamashita A."/>
            <person name="Asao H."/>
            <person name="Okumura S."/>
            <person name="Takase H."/>
            <person name="Hattori M."/>
            <person name="Yokota A."/>
            <person name="Tomizawa K."/>
        </authorList>
    </citation>
    <scope>NUCLEOTIDE SEQUENCE [LARGE SCALE GENOMIC DNA]</scope>
    <source>
        <strain>cv. Cisco</strain>
    </source>
</reference>
<reference key="2">
    <citation type="submission" date="2006-01" db="EMBL/GenBank/DDBJ databases">
        <title>A comparison of the first two published chloroplast genomes in Asteraceae: Lactuca and Helianthus.</title>
        <authorList>
            <person name="Timme R.E."/>
            <person name="Kuehl J.V."/>
            <person name="Boore J.L."/>
            <person name="Jansen R.K."/>
        </authorList>
    </citation>
    <scope>NUCLEOTIDE SEQUENCE [LARGE SCALE GENOMIC DNA]</scope>
    <source>
        <strain>cv. Salinas</strain>
    </source>
</reference>
<feature type="chain" id="PRO_0000276474" description="Large ribosomal subunit protein bL32c">
    <location>
        <begin position="1"/>
        <end position="54"/>
    </location>
</feature>
<gene>
    <name evidence="1" type="primary">rpl32</name>
</gene>
<organism>
    <name type="scientific">Lactuca sativa</name>
    <name type="common">Garden lettuce</name>
    <dbReference type="NCBI Taxonomy" id="4236"/>
    <lineage>
        <taxon>Eukaryota</taxon>
        <taxon>Viridiplantae</taxon>
        <taxon>Streptophyta</taxon>
        <taxon>Embryophyta</taxon>
        <taxon>Tracheophyta</taxon>
        <taxon>Spermatophyta</taxon>
        <taxon>Magnoliopsida</taxon>
        <taxon>eudicotyledons</taxon>
        <taxon>Gunneridae</taxon>
        <taxon>Pentapetalae</taxon>
        <taxon>asterids</taxon>
        <taxon>campanulids</taxon>
        <taxon>Asterales</taxon>
        <taxon>Asteraceae</taxon>
        <taxon>Cichorioideae</taxon>
        <taxon>Cichorieae</taxon>
        <taxon>Lactucinae</taxon>
        <taxon>Lactuca</taxon>
    </lineage>
</organism>